<evidence type="ECO:0000250" key="1">
    <source>
        <dbReference type="UniProtKB" id="P21674"/>
    </source>
</evidence>
<evidence type="ECO:0000250" key="2">
    <source>
        <dbReference type="UniProtKB" id="P47931"/>
    </source>
</evidence>
<evidence type="ECO:0000255" key="3"/>
<evidence type="ECO:0000255" key="4">
    <source>
        <dbReference type="PROSITE-ProRule" id="PRU00697"/>
    </source>
</evidence>
<evidence type="ECO:0000255" key="5">
    <source>
        <dbReference type="PROSITE-ProRule" id="PRU00798"/>
    </source>
</evidence>
<evidence type="ECO:0000256" key="6">
    <source>
        <dbReference type="SAM" id="MobiDB-lite"/>
    </source>
</evidence>
<evidence type="ECO:0000269" key="7">
    <source>
    </source>
</evidence>
<evidence type="ECO:0000269" key="8">
    <source>
    </source>
</evidence>
<evidence type="ECO:0000269" key="9">
    <source>
    </source>
</evidence>
<evidence type="ECO:0000269" key="10">
    <source>
    </source>
</evidence>
<evidence type="ECO:0000269" key="11">
    <source>
    </source>
</evidence>
<evidence type="ECO:0000269" key="12">
    <source>
    </source>
</evidence>
<evidence type="ECO:0000269" key="13">
    <source>
    </source>
</evidence>
<evidence type="ECO:0000269" key="14">
    <source>
    </source>
</evidence>
<evidence type="ECO:0000269" key="15">
    <source>
    </source>
</evidence>
<evidence type="ECO:0000269" key="16">
    <source>
    </source>
</evidence>
<evidence type="ECO:0000269" key="17">
    <source>
    </source>
</evidence>
<evidence type="ECO:0000303" key="18">
    <source>
    </source>
</evidence>
<evidence type="ECO:0000303" key="19">
    <source>
    </source>
</evidence>
<evidence type="ECO:0000312" key="20">
    <source>
        <dbReference type="HGNC" id="HGNC:3971"/>
    </source>
</evidence>
<evidence type="ECO:0007744" key="21">
    <source>
        <dbReference type="PDB" id="2B0U"/>
    </source>
</evidence>
<evidence type="ECO:0007744" key="22">
    <source>
        <dbReference type="PDB" id="2P6A"/>
    </source>
</evidence>
<evidence type="ECO:0007744" key="23">
    <source>
        <dbReference type="PDB" id="3HH2"/>
    </source>
</evidence>
<evidence type="ECO:0007744" key="24">
    <source>
        <dbReference type="PDB" id="5JHW"/>
    </source>
</evidence>
<evidence type="ECO:0007829" key="25">
    <source>
        <dbReference type="PDB" id="2B0U"/>
    </source>
</evidence>
<evidence type="ECO:0007829" key="26">
    <source>
        <dbReference type="PDB" id="2P6A"/>
    </source>
</evidence>
<evidence type="ECO:0007829" key="27">
    <source>
        <dbReference type="PDB" id="3HH2"/>
    </source>
</evidence>
<keyword id="KW-0002">3D-structure</keyword>
<keyword id="KW-0025">Alternative splicing</keyword>
<keyword id="KW-0903">Direct protein sequencing</keyword>
<keyword id="KW-1015">Disulfide bond</keyword>
<keyword id="KW-0325">Glycoprotein</keyword>
<keyword id="KW-0539">Nucleus</keyword>
<keyword id="KW-1267">Proteomics identification</keyword>
<keyword id="KW-1185">Reference proteome</keyword>
<keyword id="KW-0677">Repeat</keyword>
<keyword id="KW-0964">Secreted</keyword>
<keyword id="KW-0732">Signal</keyword>
<sequence length="344" mass="38007">MVRARHQPGGLCLLLLLLCQFMEDRSAQAGNCWLRQAKNGRCQVLYKTELSKEECCSTGRLSTSWTEEDVNDNTLFKWMIFNGGAPNCIPCKETCENVDCGPGKKCRMNKKNKPRCVCAPDCSNITWKGPVCGLDGKTYRNECALLKARCKEQPELEVQYQGRCKKTCRDVFCPGSSTCVVDQTNNAYCVTCNRICPEPASSEQYLCGNDGVTYSSACHLRKATCLLGRSIGLAYEGKCIKAKSCEDIQCTGGKKCLWDFKVGRGRCSLCDELCPDSKSDEPVCASDNATYASECAMKEAACSSGVLLEVKHSGSCNSISEDTEEEEEDEDQDYSFPISSILEW</sequence>
<accession>P19883</accession>
<accession>B5BU94</accession>
<accession>Q9BTH0</accession>
<proteinExistence type="evidence at protein level"/>
<reference key="1">
    <citation type="journal article" date="1988" name="Proc. Natl. Acad. Sci. U.S.A.">
        <title>Primary structure of the human follistatin precursor and its genomic organization.</title>
        <authorList>
            <person name="Shimasaki S."/>
            <person name="Koga M."/>
            <person name="Esch F."/>
            <person name="Cooksey K."/>
            <person name="Mercado M."/>
            <person name="Koba A."/>
            <person name="Ueno N."/>
            <person name="Ying S.-Y."/>
            <person name="Ling N."/>
            <person name="Guillemin R."/>
        </authorList>
    </citation>
    <scope>NUCLEOTIDE SEQUENCE [GENOMIC DNA] (ISOFORMS 1 AND 2)</scope>
</reference>
<reference key="2">
    <citation type="journal article" date="2008" name="Nat. Methods">
        <title>Human protein factory for converting the transcriptome into an in vitro-expressed proteome.</title>
        <authorList>
            <person name="Goshima N."/>
            <person name="Kawamura Y."/>
            <person name="Fukumoto A."/>
            <person name="Miura A."/>
            <person name="Honma R."/>
            <person name="Satoh R."/>
            <person name="Wakamatsu A."/>
            <person name="Yamamoto J."/>
            <person name="Kimura K."/>
            <person name="Nishikawa T."/>
            <person name="Andoh T."/>
            <person name="Iida Y."/>
            <person name="Ishikawa K."/>
            <person name="Ito E."/>
            <person name="Kagawa N."/>
            <person name="Kaminaga C."/>
            <person name="Kanehori K."/>
            <person name="Kawakami B."/>
            <person name="Kenmochi K."/>
            <person name="Kimura R."/>
            <person name="Kobayashi M."/>
            <person name="Kuroita T."/>
            <person name="Kuwayama H."/>
            <person name="Maruyama Y."/>
            <person name="Matsuo K."/>
            <person name="Minami K."/>
            <person name="Mitsubori M."/>
            <person name="Mori M."/>
            <person name="Morishita R."/>
            <person name="Murase A."/>
            <person name="Nishikawa A."/>
            <person name="Nishikawa S."/>
            <person name="Okamoto T."/>
            <person name="Sakagami N."/>
            <person name="Sakamoto Y."/>
            <person name="Sasaki Y."/>
            <person name="Seki T."/>
            <person name="Sono S."/>
            <person name="Sugiyama A."/>
            <person name="Sumiya T."/>
            <person name="Takayama T."/>
            <person name="Takayama Y."/>
            <person name="Takeda H."/>
            <person name="Togashi T."/>
            <person name="Yahata K."/>
            <person name="Yamada H."/>
            <person name="Yanagisawa Y."/>
            <person name="Endo Y."/>
            <person name="Imamoto F."/>
            <person name="Kisu Y."/>
            <person name="Tanaka S."/>
            <person name="Isogai T."/>
            <person name="Imai J."/>
            <person name="Watanabe S."/>
            <person name="Nomura N."/>
        </authorList>
    </citation>
    <scope>NUCLEOTIDE SEQUENCE [LARGE SCALE MRNA] (ISOFORM 2)</scope>
</reference>
<reference key="3">
    <citation type="submission" date="2005-07" db="EMBL/GenBank/DDBJ databases">
        <authorList>
            <person name="Mural R.J."/>
            <person name="Istrail S."/>
            <person name="Sutton G.G."/>
            <person name="Florea L."/>
            <person name="Halpern A.L."/>
            <person name="Mobarry C.M."/>
            <person name="Lippert R."/>
            <person name="Walenz B."/>
            <person name="Shatkay H."/>
            <person name="Dew I."/>
            <person name="Miller J.R."/>
            <person name="Flanigan M.J."/>
            <person name="Edwards N.J."/>
            <person name="Bolanos R."/>
            <person name="Fasulo D."/>
            <person name="Halldorsson B.V."/>
            <person name="Hannenhalli S."/>
            <person name="Turner R."/>
            <person name="Yooseph S."/>
            <person name="Lu F."/>
            <person name="Nusskern D.R."/>
            <person name="Shue B.C."/>
            <person name="Zheng X.H."/>
            <person name="Zhong F."/>
            <person name="Delcher A.L."/>
            <person name="Huson D.H."/>
            <person name="Kravitz S.A."/>
            <person name="Mouchard L."/>
            <person name="Reinert K."/>
            <person name="Remington K.A."/>
            <person name="Clark A.G."/>
            <person name="Waterman M.S."/>
            <person name="Eichler E.E."/>
            <person name="Adams M.D."/>
            <person name="Hunkapiller M.W."/>
            <person name="Myers E.W."/>
            <person name="Venter J.C."/>
        </authorList>
    </citation>
    <scope>NUCLEOTIDE SEQUENCE [LARGE SCALE GENOMIC DNA]</scope>
</reference>
<reference key="4">
    <citation type="journal article" date="2004" name="Genome Res.">
        <title>The status, quality, and expansion of the NIH full-length cDNA project: the Mammalian Gene Collection (MGC).</title>
        <authorList>
            <consortium name="The MGC Project Team"/>
        </authorList>
    </citation>
    <scope>NUCLEOTIDE SEQUENCE [LARGE SCALE MRNA] (ISOFORM 1)</scope>
    <source>
        <tissue>Pancreas</tissue>
    </source>
</reference>
<reference key="5">
    <citation type="journal article" date="2004" name="Protein Sci.">
        <title>Signal peptide prediction based on analysis of experimentally verified cleavage sites.</title>
        <authorList>
            <person name="Zhang Z."/>
            <person name="Henzel W.J."/>
        </authorList>
    </citation>
    <scope>PROTEIN SEQUENCE OF 30-44</scope>
</reference>
<reference key="6">
    <citation type="journal article" date="2001" name="J. Biol. Chem.">
        <title>Follistatin: essential role for the N-terminal domain in activin binding and neutralization.</title>
        <authorList>
            <person name="Sidis Y."/>
            <person name="Schneyer A.L."/>
            <person name="Sluss P.M."/>
            <person name="Johnson L.N."/>
            <person name="Keutmann H.T."/>
        </authorList>
    </citation>
    <scope>FUNCTION</scope>
    <scope>SUBCELLULAR LOCATION</scope>
    <scope>MUTAGENESIS OF TRP-33; LYS-52; CYS-55 AND CYS-56</scope>
    <scope>INTERACTION WITH ACTIVIN A/INHBA</scope>
</reference>
<reference key="7">
    <citation type="journal article" date="2004" name="J. Clin. Endocrinol. Metab.">
        <title>Differential distribution of follistatin isoforms: application of a new FS315-specific immunoassay.</title>
        <authorList>
            <person name="Schneyer A.L."/>
            <person name="Wang Q."/>
            <person name="Sidis Y."/>
            <person name="Sluss P.M."/>
        </authorList>
    </citation>
    <scope>TISSUE SPECIFICITY</scope>
</reference>
<reference key="8">
    <citation type="journal article" date="2006" name="EMBO J.">
        <title>Structural basis for the inhibition of activin signalling by follistatin.</title>
        <authorList>
            <person name="Harrington A.E."/>
            <person name="Morris-Triggs S.A."/>
            <person name="Ruotolo B.T."/>
            <person name="Robinson C.V."/>
            <person name="Ohnuma S."/>
            <person name="Hyvonen M."/>
        </authorList>
    </citation>
    <scope>FUNCTION</scope>
    <scope>INTERACTION WITH ACTIVIN A/INHBA</scope>
    <scope>MUTAGENESIS OF ARG-163</scope>
</reference>
<reference key="9">
    <citation type="journal article" date="2008" name="Endocrinology">
        <title>Differential antagonism of activin, myostatin and growth and differentiation factor 11 by wild-type and mutant follistatin.</title>
        <authorList>
            <person name="Schneyer A.L."/>
            <person name="Sidis Y."/>
            <person name="Gulati A."/>
            <person name="Sun J.L."/>
            <person name="Keutmann H."/>
            <person name="Krasney P.A."/>
        </authorList>
    </citation>
    <scope>FUNCTION</scope>
    <scope>INTERACTION WITH ACTIVIN A/INHBA; MYOSTATIN/MSTN AND GDF11</scope>
</reference>
<reference key="10">
    <citation type="journal article" date="2010" name="J. Biol. Chem.">
        <title>Nucleolar follistatin promotes cancer cell survival under glucose-deprived conditions through inhibiting cellular rRNA synthesis.</title>
        <authorList>
            <person name="Gao X."/>
            <person name="Wei S."/>
            <person name="Lai K."/>
            <person name="Sheng J."/>
            <person name="Su J."/>
            <person name="Zhu J."/>
            <person name="Dong H."/>
            <person name="Hu H."/>
            <person name="Xu Z."/>
        </authorList>
    </citation>
    <scope>FUNCTION</scope>
    <scope>SUBCELLULAR LOCATION</scope>
    <scope>INDUCTION BY GLUCOSE DEPRIVATION</scope>
</reference>
<reference key="11">
    <citation type="journal article" date="2019" name="Hum. Mutat.">
        <title>Mutations in GDF11 and the extracellular antagonist, Follistatin, as a likely cause of Mendelian forms of orofacial clefting in humans.</title>
        <authorList>
            <person name="Cox T.C."/>
            <person name="Lidral A.C."/>
            <person name="McCoy J.C."/>
            <person name="Liu H."/>
            <person name="Cox L.L."/>
            <person name="Zhu Y."/>
            <person name="Anderson R.D."/>
            <person name="Moreno Uribe L.M."/>
            <person name="Anand D."/>
            <person name="Deng M."/>
            <person name="Richter C.T."/>
            <person name="Nidey N.L."/>
            <person name="Standley J.M."/>
            <person name="Blue E.E."/>
            <person name="Chong J.X."/>
            <person name="Smith J.D."/>
            <person name="Kirk E.P."/>
            <person name="Venselaar H."/>
            <person name="Krahn K.N."/>
            <person name="van Bokhoven H."/>
            <person name="Zhou H."/>
            <person name="Cornell R.A."/>
            <person name="Glass I.A."/>
            <person name="Bamshad M.J."/>
            <person name="Nickerson D.A."/>
            <person name="Murray J.C."/>
            <person name="Lachke S.A."/>
            <person name="Thompson T.B."/>
            <person name="Buckley M.F."/>
            <person name="Roscioli T."/>
        </authorList>
    </citation>
    <scope>TISSUE SPECIFICITY</scope>
    <scope>VARIANT TYR-56</scope>
</reference>
<reference key="12">
    <citation type="journal article" date="2005" name="Dev. Cell">
        <title>The structure of the follistatin:activin complex reveals antagonism of both type I and type II receptor binding.</title>
        <authorList>
            <person name="Thompson T.B."/>
            <person name="Lerch T.F."/>
            <person name="Cook R.W."/>
            <person name="Woodruff T.K."/>
            <person name="Jardetzky T.S."/>
        </authorList>
    </citation>
    <scope>X-RAY CRYSTALLOGRAPHY (2.8 ANGSTROMS) OF 30-317 IN COMPLEX WITH ACTIVIN A</scope>
    <scope>DISULFIDE BONDS</scope>
</reference>
<reference key="13">
    <citation type="journal article" date="2007" name="J. Biol. Chem.">
        <title>Structural and biophysical coupling of heparin and activin binding to follistatin isoform functions.</title>
        <authorList>
            <person name="Lerch T.F."/>
            <person name="Shimasaki S."/>
            <person name="Woodruff T.K."/>
            <person name="Jardetzky T.S."/>
        </authorList>
    </citation>
    <scope>X-RAY CRYSTALLOGRAPHY (3.4 ANGSTROMS) OF 30-344 IN COMPLEX WITH ACTIVIN A</scope>
    <scope>DISULFIDE BONDS</scope>
</reference>
<reference key="14">
    <citation type="journal article" date="2009" name="EMBO J.">
        <title>The structure of myostatin:follistatin 288: insights into receptor utilization and heparin binding.</title>
        <authorList>
            <person name="Cash J.N."/>
            <person name="Rejon C.A."/>
            <person name="McPherron A.C."/>
            <person name="Bernard D.J."/>
            <person name="Thompson T.B."/>
        </authorList>
    </citation>
    <scope>X-RAY CRYSTALLOGRAPHY (2.15 ANGSTROMS) OF 30-317 IN COMPLEX WITH MOUSE MSTN</scope>
    <scope>DISULFIDE BONDS</scope>
</reference>
<reference evidence="24" key="15">
    <citation type="journal article" date="2017" name="BMC Biol.">
        <title>Structural basis for potency differences between GDF8 and GDF11.</title>
        <authorList>
            <person name="Walker R.G."/>
            <person name="Czepnik M."/>
            <person name="Goebel E.J."/>
            <person name="McCoy J.C."/>
            <person name="Vujic A."/>
            <person name="Cho M."/>
            <person name="Oh J."/>
            <person name="Aykul S."/>
            <person name="Walton K.L."/>
            <person name="Schang G."/>
            <person name="Bernard D.J."/>
            <person name="Hinck A.P."/>
            <person name="Harrison C.A."/>
            <person name="Martinez-Hackert E."/>
            <person name="Wagers A.J."/>
            <person name="Lee R.T."/>
            <person name="Thompson T.B."/>
        </authorList>
    </citation>
    <scope>X-RAY CRYSTALLOGRAPHY (1.90 ANGSTROMS) OF 299-407 IN COMPLEX WITH GDF11</scope>
    <scope>DISULFIDE BONDS</scope>
</reference>
<name>FST_HUMAN</name>
<gene>
    <name evidence="20" type="primary">FST</name>
</gene>
<protein>
    <recommendedName>
        <fullName evidence="19">Follistatin</fullName>
        <shortName>FS</shortName>
    </recommendedName>
    <alternativeName>
        <fullName evidence="1">Activin-binding protein</fullName>
    </alternativeName>
</protein>
<comment type="function">
    <text evidence="2 7 11 13">Multifunctional regulatory protein whose primary function is to antagonize members of the transforming growth factor beta (TGF-beta) superfamily including activin, myostatin, GDF11 or bone morphogenetic proteins (BMPs) (PubMed:11279126, PubMed:16482217, PubMed:18535106). Mechanistically, binds to these ligands in the extracellular space, blocking their type II receptor-binding site to inhibit downstream signaling (PubMed:16482217). Plays an essential role in muscle fiber formation and growth both by preventing the repressive effects of myostatin and through SMAD3/AKT/mTOR signaling independently of myostatin (By similarity). Also promotes neural differentiation by antagonizing the action BMP4 (By similarity). Acts as a specific inhibitor of the biosynthesis and secretion of pituitary follicle stimulating hormone (FSH) by sequestering activin A/INHBA (PubMed:11279126). On the other hand, translocates into the nucleus where it down-regulates rRNA synthesis and ribosome biogenesis to maintain cellular energy homeostasis by binding to rDNA.</text>
</comment>
<comment type="subunit">
    <text evidence="7 10 11 12 13 16">Interacts with GDF11 (PubMed:18535106, PubMed:28257634). Interacts with activin A/INHBA (PubMed:11279126, PubMed:16482217, PubMed:18535106, PubMed:16198295, PubMed:17409095). Interacts with MYOSTATIN/MSTN (PubMed:18535106).</text>
</comment>
<comment type="interaction">
    <interactant intactId="EBI-1571188">
        <id>P19883</id>
    </interactant>
    <interactant intactId="EBI-525291">
        <id>P03950</id>
        <label>ANG</label>
    </interactant>
    <organismsDiffer>false</organismsDiffer>
    <experiments>3</experiments>
</comment>
<comment type="interaction">
    <interactant intactId="EBI-1571188">
        <id>P19883</id>
    </interactant>
    <interactant intactId="EBI-745073">
        <id>Q9BXY8</id>
        <label>BEX2</label>
    </interactant>
    <organismsDiffer>false</organismsDiffer>
    <experiments>3</experiments>
</comment>
<comment type="interaction">
    <interactant intactId="EBI-1571188">
        <id>P19883</id>
    </interactant>
    <interactant intactId="EBI-744545">
        <id>Q8NEC5</id>
        <label>CATSPER1</label>
    </interactant>
    <organismsDiffer>false</organismsDiffer>
    <experiments>3</experiments>
</comment>
<comment type="interaction">
    <interactant intactId="EBI-1571188">
        <id>P19883</id>
    </interactant>
    <interactant intactId="EBI-10192698">
        <id>Q02930-3</id>
        <label>CREB5</label>
    </interactant>
    <organismsDiffer>false</organismsDiffer>
    <experiments>5</experiments>
</comment>
<comment type="interaction">
    <interactant intactId="EBI-1571188">
        <id>P19883</id>
    </interactant>
    <interactant intactId="EBI-2564275">
        <id>Q14689</id>
        <label>DIP2A</label>
    </interactant>
    <organismsDiffer>false</organismsDiffer>
    <experiments>2</experiments>
</comment>
<comment type="interaction">
    <interactant intactId="EBI-1571188">
        <id>P19883</id>
    </interactant>
    <interactant intactId="EBI-740785">
        <id>P49639</id>
        <label>HOXA1</label>
    </interactant>
    <organismsDiffer>false</organismsDiffer>
    <experiments>3</experiments>
</comment>
<comment type="interaction">
    <interactant intactId="EBI-1571188">
        <id>P19883</id>
    </interactant>
    <interactant intactId="EBI-594644">
        <id>P10599</id>
        <label>TXN</label>
    </interactant>
    <organismsDiffer>false</organismsDiffer>
    <experiments>3</experiments>
</comment>
<comment type="interaction">
    <interactant intactId="EBI-1571188">
        <id>P19883</id>
    </interactant>
    <interactant intactId="EBI-740727">
        <id>Q8TAU3</id>
        <label>ZNF417</label>
    </interactant>
    <organismsDiffer>false</organismsDiffer>
    <experiments>3</experiments>
</comment>
<comment type="interaction">
    <interactant intactId="EBI-1571188">
        <id>P19883</id>
    </interactant>
    <interactant intactId="EBI-6427977">
        <id>Q96SQ5</id>
        <label>ZNF587</label>
    </interactant>
    <organismsDiffer>false</organismsDiffer>
    <experiments>3</experiments>
</comment>
<comment type="subcellular location">
    <subcellularLocation>
        <location evidence="7">Secreted</location>
    </subcellularLocation>
    <subcellularLocation>
        <location evidence="15">Nucleus</location>
        <location evidence="15">Nucleolus</location>
    </subcellularLocation>
</comment>
<comment type="alternative products">
    <event type="alternative splicing"/>
    <isoform>
        <id>P19883-1</id>
        <name>1</name>
        <name>FS315</name>
        <name>FS-315</name>
        <sequence type="displayed"/>
    </isoform>
    <isoform>
        <id>P19883-2</id>
        <name>2</name>
        <name>FS288</name>
        <name>FS-288</name>
        <sequence type="described" ref="VSP_001565"/>
    </isoform>
</comment>
<comment type="tissue specificity">
    <text evidence="9 17">Isoform 1 is the predominant isoform in serum but is undetectable in follicular fluid. In the embryo, strong expression is seen in the palatal epithelia, including the medial edge epithelial and midline epithelial seam of the palatal shelves. Less pronounced expression is also seen throughout the palatal shelf and tongue mesenchyme (PubMed:31215115).</text>
</comment>
<comment type="induction">
    <text evidence="15">By glucose deprivation.</text>
</comment>
<comment type="online information" name="Atlas of Genetics and Cytogenetics in Oncology and Haematology">
    <link uri="https://atlasgeneticsoncology.org/gene/44477/FST"/>
</comment>
<feature type="signal peptide" evidence="8">
    <location>
        <begin position="1"/>
        <end position="29"/>
    </location>
</feature>
<feature type="chain" id="PRO_0000010103" description="Follistatin">
    <location>
        <begin position="30"/>
        <end position="344"/>
    </location>
</feature>
<feature type="domain" description="TB" evidence="4">
    <location>
        <begin position="30"/>
        <end position="103"/>
    </location>
</feature>
<feature type="domain" description="Follistatin-like 1">
    <location>
        <begin position="94"/>
        <end position="117"/>
    </location>
</feature>
<feature type="domain" description="Kazal-like 1" evidence="5">
    <location>
        <begin position="112"/>
        <end position="166"/>
    </location>
</feature>
<feature type="domain" description="Follistatin-like 2">
    <location>
        <begin position="167"/>
        <end position="190"/>
    </location>
</feature>
<feature type="domain" description="Kazal-like 2" evidence="5">
    <location>
        <begin position="186"/>
        <end position="241"/>
    </location>
</feature>
<feature type="domain" description="Follistatin-like 3">
    <location>
        <begin position="244"/>
        <end position="268"/>
    </location>
</feature>
<feature type="domain" description="Kazal-like 3" evidence="5">
    <location>
        <begin position="264"/>
        <end position="318"/>
    </location>
</feature>
<feature type="region of interest" description="Disordered" evidence="6">
    <location>
        <begin position="314"/>
        <end position="344"/>
    </location>
</feature>
<feature type="compositionally biased region" description="Acidic residues" evidence="6">
    <location>
        <begin position="321"/>
        <end position="333"/>
    </location>
</feature>
<feature type="glycosylation site" description="N-linked (GlcNAc...) asparagine" evidence="3">
    <location>
        <position position="124"/>
    </location>
</feature>
<feature type="glycosylation site" description="N-linked (GlcNAc...) asparagine" evidence="3">
    <location>
        <position position="288"/>
    </location>
</feature>
<feature type="disulfide bond" evidence="4 10 12 14 16 21 22 23 24">
    <location>
        <begin position="32"/>
        <end position="55"/>
    </location>
</feature>
<feature type="disulfide bond" evidence="4 10 12 14 16 21 22 23 24">
    <location>
        <begin position="42"/>
        <end position="88"/>
    </location>
</feature>
<feature type="disulfide bond" evidence="4 10 12 14 16 21 22 23 24">
    <location>
        <begin position="56"/>
        <end position="91"/>
    </location>
</feature>
<feature type="disulfide bond" evidence="10 12 14 16 21 22 23 24">
    <location>
        <begin position="95"/>
        <end position="106"/>
    </location>
</feature>
<feature type="disulfide bond" evidence="10 12 14 16 21 22 23 24">
    <location>
        <begin position="100"/>
        <end position="116"/>
    </location>
</feature>
<feature type="disulfide bond" evidence="10 12 14 16 21 22 23 24">
    <location>
        <begin position="118"/>
        <end position="150"/>
    </location>
</feature>
<feature type="disulfide bond" evidence="10 12 14 16 21 22 23 24">
    <location>
        <begin position="122"/>
        <end position="143"/>
    </location>
</feature>
<feature type="disulfide bond" evidence="10 12 14 16 21 22 23 24">
    <location>
        <begin position="132"/>
        <end position="164"/>
    </location>
</feature>
<feature type="disulfide bond" evidence="10 12 14 16 21 22 23 24">
    <location>
        <begin position="168"/>
        <end position="179"/>
    </location>
</feature>
<feature type="disulfide bond" evidence="10 12 14 16 21 22 23 24">
    <location>
        <begin position="173"/>
        <end position="189"/>
    </location>
</feature>
<feature type="disulfide bond" evidence="10 12 14 16 21 22 23 24">
    <location>
        <begin position="192"/>
        <end position="225"/>
    </location>
</feature>
<feature type="disulfide bond" evidence="10 12 14 16 21 22 23 24">
    <location>
        <begin position="196"/>
        <end position="218"/>
    </location>
</feature>
<feature type="disulfide bond" evidence="10 12 14 16 21 22 23 24">
    <location>
        <begin position="207"/>
        <end position="239"/>
    </location>
</feature>
<feature type="disulfide bond" evidence="10 12 14 16 21 22 23 24">
    <location>
        <begin position="245"/>
        <end position="256"/>
    </location>
</feature>
<feature type="disulfide bond" evidence="10 12 14 16 21 22 23 24">
    <location>
        <begin position="250"/>
        <end position="267"/>
    </location>
</feature>
<feature type="disulfide bond" evidence="10 12 14 16 21 22 23 24">
    <location>
        <begin position="270"/>
        <end position="302"/>
    </location>
</feature>
<feature type="disulfide bond" evidence="10 12 14 16 21 22 23 24">
    <location>
        <begin position="274"/>
        <end position="295"/>
    </location>
</feature>
<feature type="disulfide bond" evidence="10 12 14 16 21 22 23 24">
    <location>
        <begin position="284"/>
        <end position="316"/>
    </location>
</feature>
<feature type="splice variant" id="VSP_001565" description="In isoform 2." evidence="18">
    <location>
        <begin position="318"/>
        <end position="344"/>
    </location>
</feature>
<feature type="sequence variant" id="VAR_085164" description="Found in patients with orofacial clefting; uncertain significance; dbSNP:rs1747328996." evidence="17">
    <original>C</original>
    <variation>Y</variation>
    <location>
        <position position="56"/>
    </location>
</feature>
<feature type="sequence variant" id="VAR_049091" description="In dbSNP:rs11745088.">
    <original>E</original>
    <variation>Q</variation>
    <location>
        <position position="152"/>
    </location>
</feature>
<feature type="mutagenesis site" description="More than 90% loss of binding to activin A/INHBA and FSH secretion inhibition." evidence="7">
    <original>W</original>
    <variation>A</variation>
    <location>
        <position position="33"/>
    </location>
</feature>
<feature type="mutagenesis site" description="About 30% of binding to activin A/INHBA." evidence="7">
    <original>K</original>
    <variation>A</variation>
    <location>
        <position position="52"/>
    </location>
</feature>
<feature type="mutagenesis site" description="More than 95% loss of binding to activin A/INHBA and FSH secretion inhibition; when associated with A-56." evidence="7">
    <original>C</original>
    <variation>A</variation>
    <location>
        <position position="55"/>
    </location>
</feature>
<feature type="mutagenesis site" description="More than 95% loss of binding to activin A/INHBA and FSH secretion inhibition; when associated with A-55." evidence="7">
    <original>C</original>
    <variation>A</variation>
    <location>
        <position position="56"/>
    </location>
</feature>
<feature type="mutagenesis site" description="Complete loss of binding to activin A/INHBA." evidence="11">
    <original>R</original>
    <variation>A</variation>
    <location>
        <position position="163"/>
    </location>
</feature>
<feature type="strand" evidence="27">
    <location>
        <begin position="31"/>
        <end position="36"/>
    </location>
</feature>
<feature type="strand" evidence="27">
    <location>
        <begin position="42"/>
        <end position="49"/>
    </location>
</feature>
<feature type="helix" evidence="27">
    <location>
        <begin position="52"/>
        <end position="55"/>
    </location>
</feature>
<feature type="strand" evidence="27">
    <location>
        <begin position="64"/>
        <end position="66"/>
    </location>
</feature>
<feature type="helix" evidence="27">
    <location>
        <begin position="72"/>
        <end position="81"/>
    </location>
</feature>
<feature type="strand" evidence="27">
    <location>
        <begin position="82"/>
        <end position="87"/>
    </location>
</feature>
<feature type="strand" evidence="27">
    <location>
        <begin position="89"/>
        <end position="91"/>
    </location>
</feature>
<feature type="strand" evidence="27">
    <location>
        <begin position="93"/>
        <end position="95"/>
    </location>
</feature>
<feature type="strand" evidence="27">
    <location>
        <begin position="104"/>
        <end position="108"/>
    </location>
</feature>
<feature type="turn" evidence="26">
    <location>
        <begin position="110"/>
        <end position="112"/>
    </location>
</feature>
<feature type="strand" evidence="27">
    <location>
        <begin position="114"/>
        <end position="118"/>
    </location>
</feature>
<feature type="helix" evidence="25">
    <location>
        <begin position="123"/>
        <end position="125"/>
    </location>
</feature>
<feature type="strand" evidence="27">
    <location>
        <begin position="131"/>
        <end position="133"/>
    </location>
</feature>
<feature type="strand" evidence="27">
    <location>
        <begin position="138"/>
        <end position="141"/>
    </location>
</feature>
<feature type="helix" evidence="27">
    <location>
        <begin position="142"/>
        <end position="151"/>
    </location>
</feature>
<feature type="strand" evidence="27">
    <location>
        <begin position="158"/>
        <end position="163"/>
    </location>
</feature>
<feature type="strand" evidence="27">
    <location>
        <begin position="166"/>
        <end position="168"/>
    </location>
</feature>
<feature type="strand" evidence="27">
    <location>
        <begin position="178"/>
        <end position="181"/>
    </location>
</feature>
<feature type="strand" evidence="27">
    <location>
        <begin position="185"/>
        <end position="190"/>
    </location>
</feature>
<feature type="strand" evidence="25">
    <location>
        <begin position="202"/>
        <end position="204"/>
    </location>
</feature>
<feature type="strand" evidence="27">
    <location>
        <begin position="206"/>
        <end position="208"/>
    </location>
</feature>
<feature type="strand" evidence="27">
    <location>
        <begin position="213"/>
        <end position="216"/>
    </location>
</feature>
<feature type="helix" evidence="27">
    <location>
        <begin position="217"/>
        <end position="227"/>
    </location>
</feature>
<feature type="strand" evidence="27">
    <location>
        <begin position="233"/>
        <end position="237"/>
    </location>
</feature>
<feature type="helix" evidence="27">
    <location>
        <begin position="245"/>
        <end position="247"/>
    </location>
</feature>
<feature type="turn" evidence="26">
    <location>
        <begin position="251"/>
        <end position="253"/>
    </location>
</feature>
<feature type="strand" evidence="27">
    <location>
        <begin position="255"/>
        <end position="259"/>
    </location>
</feature>
<feature type="turn" evidence="27">
    <location>
        <begin position="260"/>
        <end position="263"/>
    </location>
</feature>
<feature type="strand" evidence="27">
    <location>
        <begin position="264"/>
        <end position="268"/>
    </location>
</feature>
<feature type="strand" evidence="27">
    <location>
        <begin position="283"/>
        <end position="285"/>
    </location>
</feature>
<feature type="strand" evidence="27">
    <location>
        <begin position="290"/>
        <end position="293"/>
    </location>
</feature>
<feature type="helix" evidence="27">
    <location>
        <begin position="294"/>
        <end position="304"/>
    </location>
</feature>
<feature type="strand" evidence="27">
    <location>
        <begin position="310"/>
        <end position="314"/>
    </location>
</feature>
<organism>
    <name type="scientific">Homo sapiens</name>
    <name type="common">Human</name>
    <dbReference type="NCBI Taxonomy" id="9606"/>
    <lineage>
        <taxon>Eukaryota</taxon>
        <taxon>Metazoa</taxon>
        <taxon>Chordata</taxon>
        <taxon>Craniata</taxon>
        <taxon>Vertebrata</taxon>
        <taxon>Euteleostomi</taxon>
        <taxon>Mammalia</taxon>
        <taxon>Eutheria</taxon>
        <taxon>Euarchontoglires</taxon>
        <taxon>Primates</taxon>
        <taxon>Haplorrhini</taxon>
        <taxon>Catarrhini</taxon>
        <taxon>Hominidae</taxon>
        <taxon>Homo</taxon>
    </lineage>
</organism>
<dbReference type="EMBL" id="M19481">
    <property type="protein sequence ID" value="AAA35851.1"/>
    <property type="molecule type" value="Genomic_DNA"/>
</dbReference>
<dbReference type="EMBL" id="M19480">
    <property type="protein sequence ID" value="AAA35851.1"/>
    <property type="status" value="JOINED"/>
    <property type="molecule type" value="Genomic_DNA"/>
</dbReference>
<dbReference type="EMBL" id="AB451330">
    <property type="protein sequence ID" value="BAG70144.1"/>
    <property type="molecule type" value="mRNA"/>
</dbReference>
<dbReference type="EMBL" id="AB451474">
    <property type="protein sequence ID" value="BAG70288.1"/>
    <property type="molecule type" value="mRNA"/>
</dbReference>
<dbReference type="EMBL" id="CH471123">
    <property type="protein sequence ID" value="EAW54880.1"/>
    <property type="molecule type" value="Genomic_DNA"/>
</dbReference>
<dbReference type="EMBL" id="BC004107">
    <property type="protein sequence ID" value="AAH04107.1"/>
    <property type="molecule type" value="mRNA"/>
</dbReference>
<dbReference type="CCDS" id="CCDS3959.1">
    <molecule id="P19883-1"/>
</dbReference>
<dbReference type="CCDS" id="CCDS43315.1">
    <molecule id="P19883-2"/>
</dbReference>
<dbReference type="PIR" id="A32141">
    <property type="entry name" value="A32141"/>
</dbReference>
<dbReference type="RefSeq" id="NP_006341.1">
    <molecule id="P19883-2"/>
    <property type="nucleotide sequence ID" value="NM_006350.5"/>
</dbReference>
<dbReference type="RefSeq" id="NP_037541.1">
    <molecule id="P19883-1"/>
    <property type="nucleotide sequence ID" value="NM_013409.3"/>
</dbReference>
<dbReference type="PDB" id="2B0U">
    <property type="method" value="X-ray"/>
    <property type="resolution" value="2.80 A"/>
    <property type="chains" value="C/D=30-317"/>
</dbReference>
<dbReference type="PDB" id="2P6A">
    <property type="method" value="X-ray"/>
    <property type="resolution" value="3.40 A"/>
    <property type="chains" value="C/D=30-344"/>
</dbReference>
<dbReference type="PDB" id="3HH2">
    <property type="method" value="X-ray"/>
    <property type="resolution" value="2.15 A"/>
    <property type="chains" value="C/D=30-317"/>
</dbReference>
<dbReference type="PDB" id="5JHW">
    <property type="method" value="X-ray"/>
    <property type="resolution" value="2.35 A"/>
    <property type="chains" value="C/D=30-317"/>
</dbReference>
<dbReference type="PDBsum" id="2B0U"/>
<dbReference type="PDBsum" id="2P6A"/>
<dbReference type="PDBsum" id="3HH2"/>
<dbReference type="PDBsum" id="5JHW"/>
<dbReference type="SMR" id="P19883"/>
<dbReference type="BioGRID" id="115731">
    <property type="interactions" value="29"/>
</dbReference>
<dbReference type="CORUM" id="P19883"/>
<dbReference type="FunCoup" id="P19883">
    <property type="interactions" value="301"/>
</dbReference>
<dbReference type="IntAct" id="P19883">
    <property type="interactions" value="29"/>
</dbReference>
<dbReference type="MINT" id="P19883"/>
<dbReference type="STRING" id="9606.ENSP00000256759"/>
<dbReference type="DrugBank" id="DB01666">
    <property type="generic name" value="D-Myo-Inositol-Hexasulphate"/>
</dbReference>
<dbReference type="MEROPS" id="I01.966"/>
<dbReference type="GlyConnect" id="1251">
    <property type="glycosylation" value="1 N-Linked glycan (1 site)"/>
</dbReference>
<dbReference type="GlyCosmos" id="P19883">
    <property type="glycosylation" value="2 sites, 9 glycans"/>
</dbReference>
<dbReference type="GlyGen" id="P19883">
    <property type="glycosylation" value="4 sites, 9 N-linked glycans (2 sites), 1 O-linked glycan (1 site)"/>
</dbReference>
<dbReference type="iPTMnet" id="P19883"/>
<dbReference type="PhosphoSitePlus" id="P19883"/>
<dbReference type="BioMuta" id="FST"/>
<dbReference type="DMDM" id="23831079"/>
<dbReference type="jPOST" id="P19883"/>
<dbReference type="MassIVE" id="P19883"/>
<dbReference type="PaxDb" id="9606-ENSP00000256759"/>
<dbReference type="PeptideAtlas" id="P19883"/>
<dbReference type="ProteomicsDB" id="53700">
    <molecule id="P19883-1"/>
</dbReference>
<dbReference type="ProteomicsDB" id="53701">
    <molecule id="P19883-2"/>
</dbReference>
<dbReference type="Antibodypedia" id="11023">
    <property type="antibodies" value="617 antibodies from 38 providers"/>
</dbReference>
<dbReference type="DNASU" id="10468"/>
<dbReference type="Ensembl" id="ENST00000256759.8">
    <molecule id="P19883-1"/>
    <property type="protein sequence ID" value="ENSP00000256759.3"/>
    <property type="gene ID" value="ENSG00000134363.12"/>
</dbReference>
<dbReference type="Ensembl" id="ENST00000396947.7">
    <molecule id="P19883-2"/>
    <property type="protein sequence ID" value="ENSP00000380151.2"/>
    <property type="gene ID" value="ENSG00000134363.12"/>
</dbReference>
<dbReference type="GeneID" id="10468"/>
<dbReference type="KEGG" id="hsa:10468"/>
<dbReference type="MANE-Select" id="ENST00000256759.8">
    <property type="protein sequence ID" value="ENSP00000256759.3"/>
    <property type="RefSeq nucleotide sequence ID" value="NM_013409.3"/>
    <property type="RefSeq protein sequence ID" value="NP_037541.1"/>
</dbReference>
<dbReference type="UCSC" id="uc003jpc.4">
    <molecule id="P19883-1"/>
    <property type="organism name" value="human"/>
</dbReference>
<dbReference type="AGR" id="HGNC:3971"/>
<dbReference type="CTD" id="10468"/>
<dbReference type="DisGeNET" id="10468"/>
<dbReference type="GeneCards" id="FST"/>
<dbReference type="HGNC" id="HGNC:3971">
    <property type="gene designation" value="FST"/>
</dbReference>
<dbReference type="HPA" id="ENSG00000134363">
    <property type="expression patterns" value="Tissue enhanced (liver)"/>
</dbReference>
<dbReference type="MIM" id="136470">
    <property type="type" value="gene"/>
</dbReference>
<dbReference type="neXtProt" id="NX_P19883"/>
<dbReference type="OpenTargets" id="ENSG00000134363"/>
<dbReference type="PharmGKB" id="PA28388"/>
<dbReference type="VEuPathDB" id="HostDB:ENSG00000134363"/>
<dbReference type="eggNOG" id="KOG3649">
    <property type="taxonomic scope" value="Eukaryota"/>
</dbReference>
<dbReference type="GeneTree" id="ENSGT00940000157072"/>
<dbReference type="HOGENOM" id="CLU_050745_0_0_1"/>
<dbReference type="InParanoid" id="P19883"/>
<dbReference type="OMA" id="DYKAYVH"/>
<dbReference type="OrthoDB" id="6614329at2759"/>
<dbReference type="PAN-GO" id="P19883">
    <property type="GO annotations" value="6 GO annotations based on evolutionary models"/>
</dbReference>
<dbReference type="PhylomeDB" id="P19883"/>
<dbReference type="TreeFam" id="TF106409"/>
<dbReference type="PathwayCommons" id="P19883"/>
<dbReference type="Reactome" id="R-HSA-2473224">
    <property type="pathway name" value="Antagonism of Activin by Follistatin"/>
</dbReference>
<dbReference type="SignaLink" id="P19883"/>
<dbReference type="SIGNOR" id="P19883"/>
<dbReference type="BioGRID-ORCS" id="10468">
    <property type="hits" value="14 hits in 1165 CRISPR screens"/>
</dbReference>
<dbReference type="ChiTaRS" id="FST">
    <property type="organism name" value="human"/>
</dbReference>
<dbReference type="EvolutionaryTrace" id="P19883"/>
<dbReference type="GeneWiki" id="Follistatin"/>
<dbReference type="GenomeRNAi" id="10468"/>
<dbReference type="Pharos" id="P19883">
    <property type="development level" value="Tbio"/>
</dbReference>
<dbReference type="PRO" id="PR:P19883"/>
<dbReference type="Proteomes" id="UP000005640">
    <property type="component" value="Chromosome 5"/>
</dbReference>
<dbReference type="RNAct" id="P19883">
    <property type="molecule type" value="protein"/>
</dbReference>
<dbReference type="Bgee" id="ENSG00000134363">
    <property type="expression patterns" value="Expressed in stromal cell of endometrium and 153 other cell types or tissues"/>
</dbReference>
<dbReference type="ExpressionAtlas" id="P19883">
    <property type="expression patterns" value="baseline and differential"/>
</dbReference>
<dbReference type="GO" id="GO:0005737">
    <property type="term" value="C:cytoplasm"/>
    <property type="evidence" value="ECO:0007669"/>
    <property type="project" value="Ensembl"/>
</dbReference>
<dbReference type="GO" id="GO:0005576">
    <property type="term" value="C:extracellular region"/>
    <property type="evidence" value="ECO:0000318"/>
    <property type="project" value="GO_Central"/>
</dbReference>
<dbReference type="GO" id="GO:0005615">
    <property type="term" value="C:extracellular space"/>
    <property type="evidence" value="ECO:0000318"/>
    <property type="project" value="GO_Central"/>
</dbReference>
<dbReference type="GO" id="GO:0005730">
    <property type="term" value="C:nucleolus"/>
    <property type="evidence" value="ECO:0007669"/>
    <property type="project" value="UniProtKB-SubCell"/>
</dbReference>
<dbReference type="GO" id="GO:0048185">
    <property type="term" value="F:activin binding"/>
    <property type="evidence" value="ECO:0000353"/>
    <property type="project" value="UniProtKB"/>
</dbReference>
<dbReference type="GO" id="GO:0038102">
    <property type="term" value="F:activin receptor antagonist activity"/>
    <property type="evidence" value="ECO:0000315"/>
    <property type="project" value="UniProtKB"/>
</dbReference>
<dbReference type="GO" id="GO:0043395">
    <property type="term" value="F:heparan sulfate proteoglycan binding"/>
    <property type="evidence" value="ECO:0007669"/>
    <property type="project" value="Ensembl"/>
</dbReference>
<dbReference type="GO" id="GO:0036305">
    <property type="term" value="P:ameloblast differentiation"/>
    <property type="evidence" value="ECO:0007669"/>
    <property type="project" value="Ensembl"/>
</dbReference>
<dbReference type="GO" id="GO:0030509">
    <property type="term" value="P:BMP signaling pathway"/>
    <property type="evidence" value="ECO:0007669"/>
    <property type="project" value="Ensembl"/>
</dbReference>
<dbReference type="GO" id="GO:0030154">
    <property type="term" value="P:cell differentiation"/>
    <property type="evidence" value="ECO:0000318"/>
    <property type="project" value="GO_Central"/>
</dbReference>
<dbReference type="GO" id="GO:0008585">
    <property type="term" value="P:female gonad development"/>
    <property type="evidence" value="ECO:0007669"/>
    <property type="project" value="Ensembl"/>
</dbReference>
<dbReference type="GO" id="GO:0007276">
    <property type="term" value="P:gamete generation"/>
    <property type="evidence" value="ECO:0007669"/>
    <property type="project" value="Ensembl"/>
</dbReference>
<dbReference type="GO" id="GO:0031069">
    <property type="term" value="P:hair follicle morphogenesis"/>
    <property type="evidence" value="ECO:0007669"/>
    <property type="project" value="Ensembl"/>
</dbReference>
<dbReference type="GO" id="GO:0002244">
    <property type="term" value="P:hematopoietic progenitor cell differentiation"/>
    <property type="evidence" value="ECO:0000314"/>
    <property type="project" value="UniProtKB"/>
</dbReference>
<dbReference type="GO" id="GO:0043616">
    <property type="term" value="P:keratinocyte proliferation"/>
    <property type="evidence" value="ECO:0007669"/>
    <property type="project" value="Ensembl"/>
</dbReference>
<dbReference type="GO" id="GO:0032926">
    <property type="term" value="P:negative regulation of activin receptor signaling pathway"/>
    <property type="evidence" value="ECO:0000314"/>
    <property type="project" value="UniProtKB"/>
</dbReference>
<dbReference type="GO" id="GO:0030857">
    <property type="term" value="P:negative regulation of epithelial cell differentiation"/>
    <property type="evidence" value="ECO:0007669"/>
    <property type="project" value="Ensembl"/>
</dbReference>
<dbReference type="GO" id="GO:0000122">
    <property type="term" value="P:negative regulation of transcription by RNA polymerase II"/>
    <property type="evidence" value="ECO:0000314"/>
    <property type="project" value="UniProtKB"/>
</dbReference>
<dbReference type="GO" id="GO:0042475">
    <property type="term" value="P:odontogenesis of dentin-containing tooth"/>
    <property type="evidence" value="ECO:0007669"/>
    <property type="project" value="Ensembl"/>
</dbReference>
<dbReference type="GO" id="GO:0007389">
    <property type="term" value="P:pattern specification process"/>
    <property type="evidence" value="ECO:0007669"/>
    <property type="project" value="Ensembl"/>
</dbReference>
<dbReference type="GO" id="GO:0051798">
    <property type="term" value="P:positive regulation of hair follicle development"/>
    <property type="evidence" value="ECO:0000314"/>
    <property type="project" value="MGI"/>
</dbReference>
<dbReference type="GO" id="GO:0030510">
    <property type="term" value="P:regulation of BMP signaling pathway"/>
    <property type="evidence" value="ECO:0000318"/>
    <property type="project" value="GO_Central"/>
</dbReference>
<dbReference type="GO" id="GO:0001501">
    <property type="term" value="P:skeletal system development"/>
    <property type="evidence" value="ECO:0007669"/>
    <property type="project" value="Ensembl"/>
</dbReference>
<dbReference type="CDD" id="cd00104">
    <property type="entry name" value="KAZAL_FS"/>
    <property type="match status" value="2"/>
</dbReference>
<dbReference type="FunFam" id="3.30.60.30:FF:000005">
    <property type="entry name" value="Follistatin a"/>
    <property type="match status" value="1"/>
</dbReference>
<dbReference type="FunFam" id="3.30.60.30:FF:000006">
    <property type="entry name" value="Follistatin a"/>
    <property type="match status" value="1"/>
</dbReference>
<dbReference type="FunFam" id="3.30.60.30:FF:000009">
    <property type="entry name" value="Follistatin a"/>
    <property type="match status" value="1"/>
</dbReference>
<dbReference type="FunFam" id="3.90.290.10:FF:000013">
    <property type="entry name" value="Follistatin a"/>
    <property type="match status" value="1"/>
</dbReference>
<dbReference type="Gene3D" id="3.30.60.30">
    <property type="match status" value="3"/>
</dbReference>
<dbReference type="Gene3D" id="3.90.290.10">
    <property type="entry name" value="TGF-beta binding (TB) domain"/>
    <property type="match status" value="1"/>
</dbReference>
<dbReference type="IDEAL" id="IID00339"/>
<dbReference type="InterPro" id="IPR003645">
    <property type="entry name" value="Fol_N"/>
</dbReference>
<dbReference type="InterPro" id="IPR015369">
    <property type="entry name" value="Follistatin/Osteonectin_EGF"/>
</dbReference>
<dbReference type="InterPro" id="IPR002350">
    <property type="entry name" value="Kazal_dom"/>
</dbReference>
<dbReference type="InterPro" id="IPR036058">
    <property type="entry name" value="Kazal_dom_sf"/>
</dbReference>
<dbReference type="InterPro" id="IPR050653">
    <property type="entry name" value="Prot_Inhib_GrowthFact_Antg"/>
</dbReference>
<dbReference type="InterPro" id="IPR017878">
    <property type="entry name" value="TB_dom"/>
</dbReference>
<dbReference type="InterPro" id="IPR036773">
    <property type="entry name" value="TB_dom_sf"/>
</dbReference>
<dbReference type="PANTHER" id="PTHR10913:SF45">
    <property type="entry name" value="FOLLISTATIN, ISOFORM A-RELATED"/>
    <property type="match status" value="1"/>
</dbReference>
<dbReference type="PANTHER" id="PTHR10913">
    <property type="entry name" value="FOLLISTATIN-RELATED"/>
    <property type="match status" value="1"/>
</dbReference>
<dbReference type="Pfam" id="PF09289">
    <property type="entry name" value="FOLN"/>
    <property type="match status" value="1"/>
</dbReference>
<dbReference type="Pfam" id="PF21333">
    <property type="entry name" value="FST_N"/>
    <property type="match status" value="1"/>
</dbReference>
<dbReference type="Pfam" id="PF07648">
    <property type="entry name" value="Kazal_2"/>
    <property type="match status" value="3"/>
</dbReference>
<dbReference type="SMART" id="SM00274">
    <property type="entry name" value="FOLN"/>
    <property type="match status" value="3"/>
</dbReference>
<dbReference type="SMART" id="SM00280">
    <property type="entry name" value="KAZAL"/>
    <property type="match status" value="3"/>
</dbReference>
<dbReference type="SUPFAM" id="SSF100895">
    <property type="entry name" value="Kazal-type serine protease inhibitors"/>
    <property type="match status" value="3"/>
</dbReference>
<dbReference type="SUPFAM" id="SSF57581">
    <property type="entry name" value="TB module/8-cys domain"/>
    <property type="match status" value="1"/>
</dbReference>
<dbReference type="PROSITE" id="PS51465">
    <property type="entry name" value="KAZAL_2"/>
    <property type="match status" value="3"/>
</dbReference>
<dbReference type="PROSITE" id="PS51364">
    <property type="entry name" value="TB"/>
    <property type="match status" value="1"/>
</dbReference>